<name>MURG_CHRFK</name>
<gene>
    <name evidence="1" type="primary">murG</name>
    <name type="ordered locus">GFO_2768</name>
</gene>
<feature type="chain" id="PRO_0000315097" description="UDP-N-acetylglucosamine--N-acetylmuramyl-(pentapeptide) pyrophosphoryl-undecaprenol N-acetylglucosamine transferase">
    <location>
        <begin position="1"/>
        <end position="366"/>
    </location>
</feature>
<feature type="binding site" evidence="1">
    <location>
        <begin position="14"/>
        <end position="16"/>
    </location>
    <ligand>
        <name>UDP-N-acetyl-alpha-D-glucosamine</name>
        <dbReference type="ChEBI" id="CHEBI:57705"/>
    </ligand>
</feature>
<feature type="binding site" evidence="1">
    <location>
        <position position="128"/>
    </location>
    <ligand>
        <name>UDP-N-acetyl-alpha-D-glucosamine</name>
        <dbReference type="ChEBI" id="CHEBI:57705"/>
    </ligand>
</feature>
<feature type="binding site" evidence="1">
    <location>
        <position position="169"/>
    </location>
    <ligand>
        <name>UDP-N-acetyl-alpha-D-glucosamine</name>
        <dbReference type="ChEBI" id="CHEBI:57705"/>
    </ligand>
</feature>
<feature type="binding site" evidence="1">
    <location>
        <position position="201"/>
    </location>
    <ligand>
        <name>UDP-N-acetyl-alpha-D-glucosamine</name>
        <dbReference type="ChEBI" id="CHEBI:57705"/>
    </ligand>
</feature>
<feature type="binding site" evidence="1">
    <location>
        <position position="251"/>
    </location>
    <ligand>
        <name>UDP-N-acetyl-alpha-D-glucosamine</name>
        <dbReference type="ChEBI" id="CHEBI:57705"/>
    </ligand>
</feature>
<feature type="binding site" evidence="1">
    <location>
        <position position="296"/>
    </location>
    <ligand>
        <name>UDP-N-acetyl-alpha-D-glucosamine</name>
        <dbReference type="ChEBI" id="CHEBI:57705"/>
    </ligand>
</feature>
<organism>
    <name type="scientific">Christiangramia forsetii (strain DSM 17595 / CGMCC 1.15422 / KT0803)</name>
    <name type="common">Gramella forsetii</name>
    <dbReference type="NCBI Taxonomy" id="411154"/>
    <lineage>
        <taxon>Bacteria</taxon>
        <taxon>Pseudomonadati</taxon>
        <taxon>Bacteroidota</taxon>
        <taxon>Flavobacteriia</taxon>
        <taxon>Flavobacteriales</taxon>
        <taxon>Flavobacteriaceae</taxon>
        <taxon>Christiangramia</taxon>
    </lineage>
</organism>
<reference key="1">
    <citation type="journal article" date="2006" name="Environ. Microbiol.">
        <title>Whole genome analysis of the marine Bacteroidetes'Gramella forsetii' reveals adaptations to degradation of polymeric organic matter.</title>
        <authorList>
            <person name="Bauer M."/>
            <person name="Kube M."/>
            <person name="Teeling H."/>
            <person name="Richter M."/>
            <person name="Lombardot T."/>
            <person name="Allers E."/>
            <person name="Wuerdemann C.A."/>
            <person name="Quast C."/>
            <person name="Kuhl H."/>
            <person name="Knaust F."/>
            <person name="Woebken D."/>
            <person name="Bischof K."/>
            <person name="Mussmann M."/>
            <person name="Choudhuri J.V."/>
            <person name="Meyer F."/>
            <person name="Reinhardt R."/>
            <person name="Amann R.I."/>
            <person name="Gloeckner F.O."/>
        </authorList>
    </citation>
    <scope>NUCLEOTIDE SEQUENCE [LARGE SCALE GENOMIC DNA]</scope>
    <source>
        <strain>DSM 17595 / CGMCC 1.15422 / KT0803</strain>
    </source>
</reference>
<sequence length="366" mass="40752">MKEGLRVILSGGGTGGHIYPAIAIADEIKRRYPNAEILFVGAQDRMEMEKVPQAGYEIKGLWISGIDRSFSLKNFIFPFKLMSSLSKSRKIIKKFKPDIVIGTGGFGSGPLLRIAISKGIPTLIQEQNSLPGVTNRILSKNASIICAAYEKVKDVFPAEKTIITGNPVRQDLLKVDQLREEALEYFQLSKDKKTVLVLGGSLGARRINRLIENDLKKFKDEGVQLVWQIGKLYFDEYRKYDSATVRAKEFINRMDLAYAAADVIISRAGAGSVSELCVVGKPVLFIPSPNVAENHQAKNAMAVTEHDAALMITEDELTERFEPCFFSLLQDERRMNRFAANIKKLALPNATSDIVDEVEKLINNKV</sequence>
<evidence type="ECO:0000255" key="1">
    <source>
        <dbReference type="HAMAP-Rule" id="MF_00033"/>
    </source>
</evidence>
<keyword id="KW-0131">Cell cycle</keyword>
<keyword id="KW-0132">Cell division</keyword>
<keyword id="KW-0997">Cell inner membrane</keyword>
<keyword id="KW-1003">Cell membrane</keyword>
<keyword id="KW-0133">Cell shape</keyword>
<keyword id="KW-0961">Cell wall biogenesis/degradation</keyword>
<keyword id="KW-0328">Glycosyltransferase</keyword>
<keyword id="KW-0472">Membrane</keyword>
<keyword id="KW-0573">Peptidoglycan synthesis</keyword>
<keyword id="KW-0808">Transferase</keyword>
<comment type="function">
    <text evidence="1">Cell wall formation. Catalyzes the transfer of a GlcNAc subunit on undecaprenyl-pyrophosphoryl-MurNAc-pentapeptide (lipid intermediate I) to form undecaprenyl-pyrophosphoryl-MurNAc-(pentapeptide)GlcNAc (lipid intermediate II).</text>
</comment>
<comment type="catalytic activity">
    <reaction evidence="1">
        <text>di-trans,octa-cis-undecaprenyl diphospho-N-acetyl-alpha-D-muramoyl-L-alanyl-D-glutamyl-meso-2,6-diaminopimeloyl-D-alanyl-D-alanine + UDP-N-acetyl-alpha-D-glucosamine = di-trans,octa-cis-undecaprenyl diphospho-[N-acetyl-alpha-D-glucosaminyl-(1-&gt;4)]-N-acetyl-alpha-D-muramoyl-L-alanyl-D-glutamyl-meso-2,6-diaminopimeloyl-D-alanyl-D-alanine + UDP + H(+)</text>
        <dbReference type="Rhea" id="RHEA:31227"/>
        <dbReference type="ChEBI" id="CHEBI:15378"/>
        <dbReference type="ChEBI" id="CHEBI:57705"/>
        <dbReference type="ChEBI" id="CHEBI:58223"/>
        <dbReference type="ChEBI" id="CHEBI:61387"/>
        <dbReference type="ChEBI" id="CHEBI:61388"/>
        <dbReference type="EC" id="2.4.1.227"/>
    </reaction>
</comment>
<comment type="pathway">
    <text evidence="1">Cell wall biogenesis; peptidoglycan biosynthesis.</text>
</comment>
<comment type="subcellular location">
    <subcellularLocation>
        <location evidence="1">Cell inner membrane</location>
        <topology evidence="1">Peripheral membrane protein</topology>
        <orientation evidence="1">Cytoplasmic side</orientation>
    </subcellularLocation>
</comment>
<comment type="similarity">
    <text evidence="1">Belongs to the glycosyltransferase 28 family. MurG subfamily.</text>
</comment>
<accession>A0M527</accession>
<dbReference type="EC" id="2.4.1.227" evidence="1"/>
<dbReference type="EMBL" id="CU207366">
    <property type="protein sequence ID" value="CAL67722.1"/>
    <property type="molecule type" value="Genomic_DNA"/>
</dbReference>
<dbReference type="RefSeq" id="WP_011710625.1">
    <property type="nucleotide sequence ID" value="NC_008571.1"/>
</dbReference>
<dbReference type="SMR" id="A0M527"/>
<dbReference type="STRING" id="411154.GFO_2768"/>
<dbReference type="CAZy" id="GT28">
    <property type="family name" value="Glycosyltransferase Family 28"/>
</dbReference>
<dbReference type="KEGG" id="gfo:GFO_2768"/>
<dbReference type="eggNOG" id="COG0707">
    <property type="taxonomic scope" value="Bacteria"/>
</dbReference>
<dbReference type="HOGENOM" id="CLU_037404_0_1_10"/>
<dbReference type="OrthoDB" id="9808936at2"/>
<dbReference type="UniPathway" id="UPA00219"/>
<dbReference type="Proteomes" id="UP000000755">
    <property type="component" value="Chromosome"/>
</dbReference>
<dbReference type="GO" id="GO:0005886">
    <property type="term" value="C:plasma membrane"/>
    <property type="evidence" value="ECO:0007669"/>
    <property type="project" value="UniProtKB-SubCell"/>
</dbReference>
<dbReference type="GO" id="GO:0051991">
    <property type="term" value="F:UDP-N-acetyl-D-glucosamine:N-acetylmuramoyl-L-alanyl-D-glutamyl-meso-2,6-diaminopimelyl-D-alanyl-D-alanine-diphosphoundecaprenol 4-beta-N-acetylglucosaminlytransferase activity"/>
    <property type="evidence" value="ECO:0007669"/>
    <property type="project" value="RHEA"/>
</dbReference>
<dbReference type="GO" id="GO:0050511">
    <property type="term" value="F:undecaprenyldiphospho-muramoylpentapeptide beta-N-acetylglucosaminyltransferase activity"/>
    <property type="evidence" value="ECO:0007669"/>
    <property type="project" value="UniProtKB-UniRule"/>
</dbReference>
<dbReference type="GO" id="GO:0005975">
    <property type="term" value="P:carbohydrate metabolic process"/>
    <property type="evidence" value="ECO:0007669"/>
    <property type="project" value="InterPro"/>
</dbReference>
<dbReference type="GO" id="GO:0051301">
    <property type="term" value="P:cell division"/>
    <property type="evidence" value="ECO:0007669"/>
    <property type="project" value="UniProtKB-KW"/>
</dbReference>
<dbReference type="GO" id="GO:0071555">
    <property type="term" value="P:cell wall organization"/>
    <property type="evidence" value="ECO:0007669"/>
    <property type="project" value="UniProtKB-KW"/>
</dbReference>
<dbReference type="GO" id="GO:0030259">
    <property type="term" value="P:lipid glycosylation"/>
    <property type="evidence" value="ECO:0007669"/>
    <property type="project" value="UniProtKB-UniRule"/>
</dbReference>
<dbReference type="GO" id="GO:0009252">
    <property type="term" value="P:peptidoglycan biosynthetic process"/>
    <property type="evidence" value="ECO:0007669"/>
    <property type="project" value="UniProtKB-UniRule"/>
</dbReference>
<dbReference type="GO" id="GO:0008360">
    <property type="term" value="P:regulation of cell shape"/>
    <property type="evidence" value="ECO:0007669"/>
    <property type="project" value="UniProtKB-KW"/>
</dbReference>
<dbReference type="CDD" id="cd03785">
    <property type="entry name" value="GT28_MurG"/>
    <property type="match status" value="1"/>
</dbReference>
<dbReference type="Gene3D" id="3.40.50.2000">
    <property type="entry name" value="Glycogen Phosphorylase B"/>
    <property type="match status" value="2"/>
</dbReference>
<dbReference type="HAMAP" id="MF_00033">
    <property type="entry name" value="MurG"/>
    <property type="match status" value="1"/>
</dbReference>
<dbReference type="InterPro" id="IPR006009">
    <property type="entry name" value="GlcNAc_MurG"/>
</dbReference>
<dbReference type="InterPro" id="IPR007235">
    <property type="entry name" value="Glyco_trans_28_C"/>
</dbReference>
<dbReference type="InterPro" id="IPR004276">
    <property type="entry name" value="GlycoTrans_28_N"/>
</dbReference>
<dbReference type="NCBIfam" id="TIGR01133">
    <property type="entry name" value="murG"/>
    <property type="match status" value="1"/>
</dbReference>
<dbReference type="PANTHER" id="PTHR21015:SF22">
    <property type="entry name" value="GLYCOSYLTRANSFERASE"/>
    <property type="match status" value="1"/>
</dbReference>
<dbReference type="PANTHER" id="PTHR21015">
    <property type="entry name" value="UDP-N-ACETYLGLUCOSAMINE--N-ACETYLMURAMYL-(PENTAPEPTIDE) PYROPHOSPHORYL-UNDECAPRENOL N-ACETYLGLUCOSAMINE TRANSFERASE 1"/>
    <property type="match status" value="1"/>
</dbReference>
<dbReference type="Pfam" id="PF04101">
    <property type="entry name" value="Glyco_tran_28_C"/>
    <property type="match status" value="1"/>
</dbReference>
<dbReference type="Pfam" id="PF03033">
    <property type="entry name" value="Glyco_transf_28"/>
    <property type="match status" value="1"/>
</dbReference>
<dbReference type="SUPFAM" id="SSF53756">
    <property type="entry name" value="UDP-Glycosyltransferase/glycogen phosphorylase"/>
    <property type="match status" value="1"/>
</dbReference>
<proteinExistence type="inferred from homology"/>
<protein>
    <recommendedName>
        <fullName evidence="1">UDP-N-acetylglucosamine--N-acetylmuramyl-(pentapeptide) pyrophosphoryl-undecaprenol N-acetylglucosamine transferase</fullName>
        <ecNumber evidence="1">2.4.1.227</ecNumber>
    </recommendedName>
    <alternativeName>
        <fullName evidence="1">Undecaprenyl-PP-MurNAc-pentapeptide-UDPGlcNAc GlcNAc transferase</fullName>
    </alternativeName>
</protein>